<comment type="function">
    <text evidence="1">Esterase that catalyzes the deacetylation of acetyl-(R)-mandelate (in vitro). Can also hydrolyze acetyl glycolate, but with lower efficiency. Has very low N-acetyl-D-amino acid deacetylase activity with N-acetyl-D-serine and N-acetyl-D-threonine (in vitro). Theoretical substrate docking studies suggest that other N-acetylated amino acids may optimally occupy the active site and may in fact be the physiological substrates.</text>
</comment>
<comment type="cofactor">
    <cofactor evidence="1">
        <name>Zn(2+)</name>
        <dbReference type="ChEBI" id="CHEBI:29105"/>
    </cofactor>
    <text evidence="1">Binds 2 Zn(2+) ions per subunit.</text>
</comment>
<comment type="biophysicochemical properties">
    <kinetics>
        <KM evidence="1">1 mM for acetyl-(R)-mandelate</KM>
    </kinetics>
</comment>
<comment type="subunit">
    <text evidence="2">Homohexamer, dimer of trimers.</text>
</comment>
<comment type="similarity">
    <text evidence="2">Belongs to the metallo-dependent hydrolases superfamily. Atu3266/EF_0837 deacetylase family.</text>
</comment>
<dbReference type="EC" id="3.1.1.-"/>
<dbReference type="EMBL" id="AE007870">
    <property type="protein sequence ID" value="AAK90124.2"/>
    <property type="molecule type" value="Genomic_DNA"/>
</dbReference>
<dbReference type="RefSeq" id="NP_357339.2">
    <property type="nucleotide sequence ID" value="NC_003063.2"/>
</dbReference>
<dbReference type="RefSeq" id="WP_010972896.1">
    <property type="nucleotide sequence ID" value="NC_003063.2"/>
</dbReference>
<dbReference type="PDB" id="2OGJ">
    <property type="method" value="X-ray"/>
    <property type="resolution" value="2.62 A"/>
    <property type="chains" value="A/B/C/D/E/F=2-407"/>
</dbReference>
<dbReference type="PDBsum" id="2OGJ"/>
<dbReference type="SMR" id="Q7CS13"/>
<dbReference type="STRING" id="176299.Atu3266"/>
<dbReference type="EnsemblBacteria" id="AAK90124">
    <property type="protein sequence ID" value="AAK90124"/>
    <property type="gene ID" value="Atu3266"/>
</dbReference>
<dbReference type="GeneID" id="1135140"/>
<dbReference type="KEGG" id="atu:Atu3266"/>
<dbReference type="PATRIC" id="fig|176299.10.peg.3108"/>
<dbReference type="eggNOG" id="COG3964">
    <property type="taxonomic scope" value="Bacteria"/>
</dbReference>
<dbReference type="HOGENOM" id="CLU_036699_2_0_5"/>
<dbReference type="OrthoDB" id="9796020at2"/>
<dbReference type="PhylomeDB" id="Q7CS13"/>
<dbReference type="BioCyc" id="AGRO:ATU3266-MONOMER"/>
<dbReference type="EvolutionaryTrace" id="Q7CS13"/>
<dbReference type="Proteomes" id="UP000000813">
    <property type="component" value="Chromosome linear"/>
</dbReference>
<dbReference type="GO" id="GO:0019213">
    <property type="term" value="F:deacetylase activity"/>
    <property type="evidence" value="ECO:0007669"/>
    <property type="project" value="InterPro"/>
</dbReference>
<dbReference type="GO" id="GO:0016810">
    <property type="term" value="F:hydrolase activity, acting on carbon-nitrogen (but not peptide) bonds"/>
    <property type="evidence" value="ECO:0007669"/>
    <property type="project" value="InterPro"/>
</dbReference>
<dbReference type="GO" id="GO:0046872">
    <property type="term" value="F:metal ion binding"/>
    <property type="evidence" value="ECO:0007669"/>
    <property type="project" value="UniProtKB-KW"/>
</dbReference>
<dbReference type="CDD" id="cd01307">
    <property type="entry name" value="Met_dep_hydrolase_B"/>
    <property type="match status" value="1"/>
</dbReference>
<dbReference type="FunFam" id="3.20.20.140:FF:000051">
    <property type="entry name" value="Dihydroorotase protein"/>
    <property type="match status" value="1"/>
</dbReference>
<dbReference type="Gene3D" id="3.20.20.140">
    <property type="entry name" value="Metal-dependent hydrolases"/>
    <property type="match status" value="1"/>
</dbReference>
<dbReference type="Gene3D" id="2.30.40.10">
    <property type="entry name" value="Urease, subunit C, domain 1"/>
    <property type="match status" value="1"/>
</dbReference>
<dbReference type="InterPro" id="IPR006680">
    <property type="entry name" value="Amidohydro-rel"/>
</dbReference>
<dbReference type="InterPro" id="IPR020043">
    <property type="entry name" value="Deacetylase_Atu3266-like"/>
</dbReference>
<dbReference type="InterPro" id="IPR011059">
    <property type="entry name" value="Metal-dep_hydrolase_composite"/>
</dbReference>
<dbReference type="InterPro" id="IPR032466">
    <property type="entry name" value="Metal_Hydrolase"/>
</dbReference>
<dbReference type="NCBIfam" id="NF006689">
    <property type="entry name" value="PRK09237.1"/>
    <property type="match status" value="1"/>
</dbReference>
<dbReference type="PANTHER" id="PTHR42717">
    <property type="entry name" value="DIHYDROOROTASE-RELATED"/>
    <property type="match status" value="1"/>
</dbReference>
<dbReference type="PANTHER" id="PTHR42717:SF1">
    <property type="entry name" value="IMIDAZOLONEPROPIONASE AND RELATED AMIDOHYDROLASES"/>
    <property type="match status" value="1"/>
</dbReference>
<dbReference type="Pfam" id="PF01979">
    <property type="entry name" value="Amidohydro_1"/>
    <property type="match status" value="1"/>
</dbReference>
<dbReference type="PIRSF" id="PIRSF039004">
    <property type="entry name" value="ADE_EF_0837"/>
    <property type="match status" value="1"/>
</dbReference>
<dbReference type="SUPFAM" id="SSF51338">
    <property type="entry name" value="Composite domain of metallo-dependent hydrolases"/>
    <property type="match status" value="1"/>
</dbReference>
<dbReference type="SUPFAM" id="SSF51556">
    <property type="entry name" value="Metallo-dependent hydrolases"/>
    <property type="match status" value="1"/>
</dbReference>
<organism>
    <name type="scientific">Agrobacterium fabrum (strain C58 / ATCC 33970)</name>
    <name type="common">Agrobacterium tumefaciens (strain C58)</name>
    <dbReference type="NCBI Taxonomy" id="176299"/>
    <lineage>
        <taxon>Bacteria</taxon>
        <taxon>Pseudomonadati</taxon>
        <taxon>Pseudomonadota</taxon>
        <taxon>Alphaproteobacteria</taxon>
        <taxon>Hyphomicrobiales</taxon>
        <taxon>Rhizobiaceae</taxon>
        <taxon>Rhizobium/Agrobacterium group</taxon>
        <taxon>Agrobacterium</taxon>
        <taxon>Agrobacterium tumefaciens complex</taxon>
    </lineage>
</organism>
<proteinExistence type="evidence at protein level"/>
<gene>
    <name type="ordered locus">Atu3266</name>
</gene>
<sequence>MTSGEQAKTPLQAPILLTNVKPVGFGKGASQSSTDILIGGDGKIAAVGSALQAPADTQRIDAKGAFISPGWVDLHVHIWHGGTDISIRPSECGAERGVTTLVDAGSAGEANFHGFREYIIEPSRERIKAFLNLGSIGLVACNRVPELRDIKDIDLDRILECYAENSEHIVGLKVRASHVITGSWGVTPVKLGKKIAKILKVPMMVHVGEPPALYDEVLEILGPGDVVTHCFNGKSGSSIMEDEDLFNLAERCAGEGIRLDIGHGGASFSFKVAEAAIARGLLPFSISTDLHGHSMNFPVWDLATTMSKLLSVDMPFENVVEAVTRNPASVIRLDMENRLDVGQRADFTVFDLVDADLEATDSNGDVSRLKRLFEPRYAVIGAEAIAASRYIPRARKLVRHSHGYSWR</sequence>
<protein>
    <recommendedName>
        <fullName>Deacetylase Atu3266</fullName>
        <ecNumber>3.1.1.-</ecNumber>
    </recommendedName>
</protein>
<feature type="chain" id="PRO_0000429019" description="Deacetylase Atu3266">
    <location>
        <begin position="1"/>
        <end position="407"/>
    </location>
</feature>
<feature type="binding site" evidence="1">
    <location>
        <position position="75"/>
    </location>
    <ligand>
        <name>Zn(2+)</name>
        <dbReference type="ChEBI" id="CHEBI:29105"/>
        <label>1</label>
    </ligand>
</feature>
<feature type="binding site" evidence="1">
    <location>
        <position position="77"/>
    </location>
    <ligand>
        <name>Zn(2+)</name>
        <dbReference type="ChEBI" id="CHEBI:29105"/>
        <label>1</label>
    </ligand>
</feature>
<feature type="binding site" description="via carbamate group" evidence="1">
    <location>
        <position position="173"/>
    </location>
    <ligand>
        <name>Zn(2+)</name>
        <dbReference type="ChEBI" id="CHEBI:29105"/>
        <label>1</label>
    </ligand>
</feature>
<feature type="binding site" description="via carbamate group" evidence="1">
    <location>
        <position position="173"/>
    </location>
    <ligand>
        <name>Zn(2+)</name>
        <dbReference type="ChEBI" id="CHEBI:29105"/>
        <label>2</label>
    </ligand>
</feature>
<feature type="binding site" evidence="1">
    <location>
        <position position="206"/>
    </location>
    <ligand>
        <name>Zn(2+)</name>
        <dbReference type="ChEBI" id="CHEBI:29105"/>
        <label>2</label>
    </ligand>
</feature>
<feature type="binding site" evidence="1">
    <location>
        <position position="229"/>
    </location>
    <ligand>
        <name>Zn(2+)</name>
        <dbReference type="ChEBI" id="CHEBI:29105"/>
        <label>2</label>
    </ligand>
</feature>
<feature type="binding site" evidence="1">
    <location>
        <position position="289"/>
    </location>
    <ligand>
        <name>Zn(2+)</name>
        <dbReference type="ChEBI" id="CHEBI:29105"/>
        <label>1</label>
    </ligand>
</feature>
<feature type="site" description="Transition state stabilizer" evidence="2">
    <location>
        <position position="175"/>
    </location>
</feature>
<feature type="modified residue" description="N6-carboxylysine" evidence="1">
    <location>
        <position position="173"/>
    </location>
</feature>
<feature type="strand" evidence="3">
    <location>
        <begin position="15"/>
        <end position="22"/>
    </location>
</feature>
<feature type="strand" evidence="3">
    <location>
        <begin position="34"/>
        <end position="38"/>
    </location>
</feature>
<feature type="strand" evidence="3">
    <location>
        <begin position="42"/>
        <end position="48"/>
    </location>
</feature>
<feature type="strand" evidence="3">
    <location>
        <begin position="57"/>
        <end position="59"/>
    </location>
</feature>
<feature type="strand" evidence="3">
    <location>
        <begin position="66"/>
        <end position="69"/>
    </location>
</feature>
<feature type="strand" evidence="3">
    <location>
        <begin position="71"/>
        <end position="76"/>
    </location>
</feature>
<feature type="strand" evidence="3">
    <location>
        <begin position="83"/>
        <end position="85"/>
    </location>
</feature>
<feature type="helix" evidence="3">
    <location>
        <begin position="89"/>
        <end position="91"/>
    </location>
</feature>
<feature type="helix" evidence="3">
    <location>
        <begin position="94"/>
        <end position="96"/>
    </location>
</feature>
<feature type="strand" evidence="3">
    <location>
        <begin position="98"/>
        <end position="106"/>
    </location>
</feature>
<feature type="helix" evidence="3">
    <location>
        <begin position="112"/>
        <end position="118"/>
    </location>
</feature>
<feature type="turn" evidence="3">
    <location>
        <begin position="119"/>
        <end position="122"/>
    </location>
</feature>
<feature type="strand" evidence="3">
    <location>
        <begin position="124"/>
        <end position="134"/>
    </location>
</feature>
<feature type="turn" evidence="3">
    <location>
        <begin position="135"/>
        <end position="143"/>
    </location>
</feature>
<feature type="helix" evidence="3">
    <location>
        <begin position="150"/>
        <end position="152"/>
    </location>
</feature>
<feature type="helix" evidence="3">
    <location>
        <begin position="155"/>
        <end position="163"/>
    </location>
</feature>
<feature type="turn" evidence="3">
    <location>
        <begin position="166"/>
        <end position="168"/>
    </location>
</feature>
<feature type="strand" evidence="3">
    <location>
        <begin position="169"/>
        <end position="177"/>
    </location>
</feature>
<feature type="helix" evidence="3">
    <location>
        <begin position="178"/>
        <end position="181"/>
    </location>
</feature>
<feature type="helix" evidence="3">
    <location>
        <begin position="187"/>
        <end position="199"/>
    </location>
</feature>
<feature type="strand" evidence="3">
    <location>
        <begin position="203"/>
        <end position="207"/>
    </location>
</feature>
<feature type="strand" evidence="3">
    <location>
        <begin position="209"/>
        <end position="212"/>
    </location>
</feature>
<feature type="helix" evidence="3">
    <location>
        <begin position="214"/>
        <end position="220"/>
    </location>
</feature>
<feature type="strand" evidence="3">
    <location>
        <begin position="226"/>
        <end position="228"/>
    </location>
</feature>
<feature type="turn" evidence="3">
    <location>
        <begin position="229"/>
        <end position="231"/>
    </location>
</feature>
<feature type="turn" evidence="3">
    <location>
        <begin position="235"/>
        <end position="237"/>
    </location>
</feature>
<feature type="helix" evidence="3">
    <location>
        <begin position="243"/>
        <end position="251"/>
    </location>
</feature>
<feature type="strand" evidence="3">
    <location>
        <begin position="258"/>
        <end position="260"/>
    </location>
</feature>
<feature type="strand" evidence="3">
    <location>
        <begin position="265"/>
        <end position="267"/>
    </location>
</feature>
<feature type="helix" evidence="3">
    <location>
        <begin position="270"/>
        <end position="278"/>
    </location>
</feature>
<feature type="turn" evidence="3">
    <location>
        <begin position="292"/>
        <end position="298"/>
    </location>
</feature>
<feature type="helix" evidence="3">
    <location>
        <begin position="302"/>
        <end position="311"/>
    </location>
</feature>
<feature type="helix" evidence="3">
    <location>
        <begin position="316"/>
        <end position="321"/>
    </location>
</feature>
<feature type="turn" evidence="3">
    <location>
        <begin position="322"/>
        <end position="324"/>
    </location>
</feature>
<feature type="helix" evidence="3">
    <location>
        <begin position="325"/>
        <end position="330"/>
    </location>
</feature>
<feature type="strand" evidence="3">
    <location>
        <begin position="346"/>
        <end position="360"/>
    </location>
</feature>
<feature type="strand" evidence="3">
    <location>
        <begin position="366"/>
        <end position="380"/>
    </location>
</feature>
<feature type="strand" evidence="3">
    <location>
        <begin position="383"/>
        <end position="386"/>
    </location>
</feature>
<name>DEACT_AGRFC</name>
<keyword id="KW-0002">3D-structure</keyword>
<keyword id="KW-0378">Hydrolase</keyword>
<keyword id="KW-0479">Metal-binding</keyword>
<keyword id="KW-1185">Reference proteome</keyword>
<keyword id="KW-0862">Zinc</keyword>
<accession>Q7CS13</accession>
<evidence type="ECO:0000269" key="1">
    <source>
    </source>
</evidence>
<evidence type="ECO:0000305" key="2"/>
<evidence type="ECO:0007829" key="3">
    <source>
        <dbReference type="PDB" id="2OGJ"/>
    </source>
</evidence>
<reference key="1">
    <citation type="journal article" date="2001" name="Science">
        <title>The genome of the natural genetic engineer Agrobacterium tumefaciens C58.</title>
        <authorList>
            <person name="Wood D.W."/>
            <person name="Setubal J.C."/>
            <person name="Kaul R."/>
            <person name="Monks D.E."/>
            <person name="Kitajima J.P."/>
            <person name="Okura V.K."/>
            <person name="Zhou Y."/>
            <person name="Chen L."/>
            <person name="Wood G.E."/>
            <person name="Almeida N.F. Jr."/>
            <person name="Woo L."/>
            <person name="Chen Y."/>
            <person name="Paulsen I.T."/>
            <person name="Eisen J.A."/>
            <person name="Karp P.D."/>
            <person name="Bovee D. Sr."/>
            <person name="Chapman P."/>
            <person name="Clendenning J."/>
            <person name="Deatherage G."/>
            <person name="Gillet W."/>
            <person name="Grant C."/>
            <person name="Kutyavin T."/>
            <person name="Levy R."/>
            <person name="Li M.-J."/>
            <person name="McClelland E."/>
            <person name="Palmieri A."/>
            <person name="Raymond C."/>
            <person name="Rouse G."/>
            <person name="Saenphimmachak C."/>
            <person name="Wu Z."/>
            <person name="Romero P."/>
            <person name="Gordon D."/>
            <person name="Zhang S."/>
            <person name="Yoo H."/>
            <person name="Tao Y."/>
            <person name="Biddle P."/>
            <person name="Jung M."/>
            <person name="Krespan W."/>
            <person name="Perry M."/>
            <person name="Gordon-Kamm B."/>
            <person name="Liao L."/>
            <person name="Kim S."/>
            <person name="Hendrick C."/>
            <person name="Zhao Z.-Y."/>
            <person name="Dolan M."/>
            <person name="Chumley F."/>
            <person name="Tingey S.V."/>
            <person name="Tomb J.-F."/>
            <person name="Gordon M.P."/>
            <person name="Olson M.V."/>
            <person name="Nester E.W."/>
        </authorList>
    </citation>
    <scope>NUCLEOTIDE SEQUENCE [LARGE SCALE GENOMIC DNA]</scope>
    <source>
        <strain>C58 / ATCC 33970</strain>
    </source>
</reference>
<reference key="2">
    <citation type="journal article" date="2001" name="Science">
        <title>Genome sequence of the plant pathogen and biotechnology agent Agrobacterium tumefaciens C58.</title>
        <authorList>
            <person name="Goodner B."/>
            <person name="Hinkle G."/>
            <person name="Gattung S."/>
            <person name="Miller N."/>
            <person name="Blanchard M."/>
            <person name="Qurollo B."/>
            <person name="Goldman B.S."/>
            <person name="Cao Y."/>
            <person name="Askenazi M."/>
            <person name="Halling C."/>
            <person name="Mullin L."/>
            <person name="Houmiel K."/>
            <person name="Gordon J."/>
            <person name="Vaudin M."/>
            <person name="Iartchouk O."/>
            <person name="Epp A."/>
            <person name="Liu F."/>
            <person name="Wollam C."/>
            <person name="Allinger M."/>
            <person name="Doughty D."/>
            <person name="Scott C."/>
            <person name="Lappas C."/>
            <person name="Markelz B."/>
            <person name="Flanagan C."/>
            <person name="Crowell C."/>
            <person name="Gurson J."/>
            <person name="Lomo C."/>
            <person name="Sear C."/>
            <person name="Strub G."/>
            <person name="Cielo C."/>
            <person name="Slater S."/>
        </authorList>
    </citation>
    <scope>NUCLEOTIDE SEQUENCE [LARGE SCALE GENOMIC DNA]</scope>
    <source>
        <strain>C58 / ATCC 33970</strain>
    </source>
</reference>
<reference key="3">
    <citation type="journal article" date="2013" name="Biochemistry">
        <title>Functional annotation and three-dimensional structure of an incorrectly annotated dihydroorotase from cog3964 in the amidohydrolase superfamily.</title>
        <authorList>
            <person name="Ornelas A."/>
            <person name="Korczynska M."/>
            <person name="Ragumani S."/>
            <person name="Kumaran D."/>
            <person name="Narindoshvili T."/>
            <person name="Shoichet B.K."/>
            <person name="Swaminathan S."/>
            <person name="Raushel F.M."/>
        </authorList>
    </citation>
    <scope>X-RAY CRYSTALLOGRAPHY (2.62 ANGSTROMS) IN COMPLEX WITH ZINC</scope>
    <scope>CARBOXYLATION AT LYS-173</scope>
    <scope>COFACTOR</scope>
    <scope>FUNCTION</scope>
    <scope>BIOPHYSICOCHEMICAL PROPERTIES</scope>
    <scope>SUBUNIT</scope>
    <scope>LACK OF DIHYDROOROTASE ACTIVITY</scope>
    <source>
        <strain>C58 / ATCC 33970</strain>
    </source>
</reference>